<reference key="1">
    <citation type="journal article" date="1989" name="J. Biol. Chem.">
        <title>Transcriptional analysis of puf operon expression in Rhodobacter sphaeroides 2.4.1 and an intercistronic transcription terminator mutant.</title>
        <authorList>
            <person name="Lee J.K."/>
            <person name="Dehoff B.S."/>
            <person name="Donohue T.J."/>
            <person name="Gumport R.I."/>
            <person name="Kaplan S."/>
        </authorList>
    </citation>
    <scope>NUCLEOTIDE SEQUENCE [GENOMIC DNA]</scope>
</reference>
<reference key="2">
    <citation type="journal article" date="2000" name="Nucleic Acids Res.">
        <title>DNA sequence analysis of the photosynthesis region of Rhodobacter sphaeroides 2.4.1.</title>
        <authorList>
            <person name="Choudhary M."/>
            <person name="Kaplan S."/>
        </authorList>
    </citation>
    <scope>NUCLEOTIDE SEQUENCE [GENOMIC DNA]</scope>
</reference>
<reference key="3">
    <citation type="submission" date="2005-09" db="EMBL/GenBank/DDBJ databases">
        <title>Complete sequence of chromosome 1 of Rhodobacter sphaeroides 2.4.1.</title>
        <authorList>
            <person name="Copeland A."/>
            <person name="Lucas S."/>
            <person name="Lapidus A."/>
            <person name="Barry K."/>
            <person name="Detter J.C."/>
            <person name="Glavina T."/>
            <person name="Hammon N."/>
            <person name="Israni S."/>
            <person name="Pitluck S."/>
            <person name="Richardson P."/>
            <person name="Mackenzie C."/>
            <person name="Choudhary M."/>
            <person name="Larimer F."/>
            <person name="Hauser L.J."/>
            <person name="Land M."/>
            <person name="Donohue T.J."/>
            <person name="Kaplan S."/>
        </authorList>
    </citation>
    <scope>NUCLEOTIDE SEQUENCE [LARGE SCALE GENOMIC DNA]</scope>
    <source>
        <strain>ATCC 17023 / DSM 158 / JCM 6121 / CCUG 31486 / LMG 2827 / NBRC 12203 / NCIMB 8253 / ATH 2.4.1.</strain>
    </source>
</reference>
<reference key="4">
    <citation type="journal article" date="1992" name="EMBO J.">
        <title>Studies on the expression of the pufX polypeptide and its requirement for photoheterotrophic growth in Rhodobacter sphaeroides.</title>
        <authorList>
            <person name="Farchaus J.W."/>
            <person name="Barz W.P."/>
            <person name="Gruenberg H."/>
            <person name="Oesterhelt D."/>
        </authorList>
    </citation>
    <scope>SUBCELLULAR LOCATION</scope>
    <scope>POSSIBLE FUNCTION</scope>
</reference>
<sequence>MADKTIFNDHLNTNPKTNLRLWVAFQMMKGAGWAGGVFFGTLLLIGFFRVVGRMLPIQENQAPAPNITGALETGIELIKHLV</sequence>
<accession>P13402</accession>
<accession>Q3J1A7</accession>
<organism>
    <name type="scientific">Cereibacter sphaeroides (strain ATCC 17023 / DSM 158 / JCM 6121 / CCUG 31486 / LMG 2827 / NBRC 12203 / NCIMB 8253 / ATH 2.4.1.)</name>
    <name type="common">Rhodobacter sphaeroides</name>
    <dbReference type="NCBI Taxonomy" id="272943"/>
    <lineage>
        <taxon>Bacteria</taxon>
        <taxon>Pseudomonadati</taxon>
        <taxon>Pseudomonadota</taxon>
        <taxon>Alphaproteobacteria</taxon>
        <taxon>Rhodobacterales</taxon>
        <taxon>Paracoccaceae</taxon>
        <taxon>Cereibacter</taxon>
    </lineage>
</organism>
<name>PUFX_CERS4</name>
<comment type="function">
    <text>Associated with the reaction center - light-harvesting complex I. May play a critical role in facilitating the interaction between this complex and other components required for light-driven cyclic electron transfer.</text>
</comment>
<comment type="subcellular location">
    <subcellularLocation>
        <location evidence="1">Cell membrane</location>
    </subcellularLocation>
</comment>
<comment type="similarity">
    <text evidence="2">Belongs to the PufX family.</text>
</comment>
<keyword id="KW-0002">3D-structure</keyword>
<keyword id="KW-1003">Cell membrane</keyword>
<keyword id="KW-0472">Membrane</keyword>
<keyword id="KW-0602">Photosynthesis</keyword>
<keyword id="KW-1185">Reference proteome</keyword>
<feature type="chain" id="PRO_0000097105" description="Intrinsic membrane protein PufX">
    <location>
        <begin position="1"/>
        <end position="82"/>
    </location>
</feature>
<feature type="helix" evidence="3">
    <location>
        <begin position="17"/>
        <end position="54"/>
    </location>
</feature>
<feature type="turn" evidence="3">
    <location>
        <begin position="55"/>
        <end position="59"/>
    </location>
</feature>
<evidence type="ECO:0000269" key="1">
    <source>
    </source>
</evidence>
<evidence type="ECO:0000305" key="2"/>
<evidence type="ECO:0007829" key="3">
    <source>
        <dbReference type="PDB" id="7VNY"/>
    </source>
</evidence>
<gene>
    <name type="primary">pufX</name>
    <name type="ordered locus">RHOS4_18590</name>
    <name type="ORF">RSP_0255</name>
</gene>
<proteinExistence type="evidence at protein level"/>
<protein>
    <recommendedName>
        <fullName>Intrinsic membrane protein PufX</fullName>
    </recommendedName>
</protein>
<dbReference type="EMBL" id="J05098">
    <property type="protein sequence ID" value="AAA26129.1"/>
    <property type="molecule type" value="Genomic_DNA"/>
</dbReference>
<dbReference type="EMBL" id="AF195122">
    <property type="protein sequence ID" value="AAF24306.1"/>
    <property type="molecule type" value="Genomic_DNA"/>
</dbReference>
<dbReference type="EMBL" id="CP000143">
    <property type="protein sequence ID" value="ABA79427.1"/>
    <property type="molecule type" value="Genomic_DNA"/>
</dbReference>
<dbReference type="PIR" id="A34449">
    <property type="entry name" value="A34449"/>
</dbReference>
<dbReference type="RefSeq" id="WP_002720419.1">
    <property type="nucleotide sequence ID" value="NZ_CP030271.1"/>
</dbReference>
<dbReference type="RefSeq" id="YP_353328.1">
    <property type="nucleotide sequence ID" value="NC_007493.2"/>
</dbReference>
<dbReference type="PDB" id="2DW3">
    <property type="method" value="NMR"/>
    <property type="chains" value="A=2-72"/>
</dbReference>
<dbReference type="PDB" id="2ITA">
    <property type="method" value="NMR"/>
    <property type="chains" value="A=1-70"/>
</dbReference>
<dbReference type="PDB" id="2NRG">
    <property type="method" value="NMR"/>
    <property type="chains" value="A=1-82"/>
</dbReference>
<dbReference type="PDB" id="4V9G">
    <property type="method" value="X-ray"/>
    <property type="resolution" value="7.78 A"/>
    <property type="chains" value="AB/BB=1-82"/>
</dbReference>
<dbReference type="PDB" id="7F0L">
    <property type="method" value="EM"/>
    <property type="resolution" value="2.94 A"/>
    <property type="chains" value="X=1-82"/>
</dbReference>
<dbReference type="PDB" id="7PIL">
    <property type="method" value="EM"/>
    <property type="resolution" value="2.50 A"/>
    <property type="chains" value="X=15-69"/>
</dbReference>
<dbReference type="PDB" id="7VA9">
    <property type="method" value="EM"/>
    <property type="resolution" value="3.08 A"/>
    <property type="chains" value="C/c=1-82"/>
</dbReference>
<dbReference type="PDB" id="7VB9">
    <property type="method" value="EM"/>
    <property type="resolution" value="3.45 A"/>
    <property type="chains" value="C/c=1-82"/>
</dbReference>
<dbReference type="PDB" id="7VNM">
    <property type="method" value="EM"/>
    <property type="resolution" value="2.86 A"/>
    <property type="chains" value="X=1-82"/>
</dbReference>
<dbReference type="PDB" id="7VNY">
    <property type="method" value="EM"/>
    <property type="resolution" value="2.79 A"/>
    <property type="chains" value="X=1-82"/>
</dbReference>
<dbReference type="PDB" id="7VOR">
    <property type="method" value="EM"/>
    <property type="resolution" value="2.74 A"/>
    <property type="chains" value="X/x=1-82"/>
</dbReference>
<dbReference type="PDB" id="7VOT">
    <property type="method" value="EM"/>
    <property type="resolution" value="2.90 A"/>
    <property type="chains" value="X/x=1-82"/>
</dbReference>
<dbReference type="PDBsum" id="2DW3"/>
<dbReference type="PDBsum" id="2ITA"/>
<dbReference type="PDBsum" id="2NRG"/>
<dbReference type="PDBsum" id="4V9G"/>
<dbReference type="PDBsum" id="7F0L"/>
<dbReference type="PDBsum" id="7PIL"/>
<dbReference type="PDBsum" id="7VA9"/>
<dbReference type="PDBsum" id="7VB9"/>
<dbReference type="PDBsum" id="7VNM"/>
<dbReference type="PDBsum" id="7VNY"/>
<dbReference type="PDBsum" id="7VOR"/>
<dbReference type="PDBsum" id="7VOT"/>
<dbReference type="BMRB" id="P13402"/>
<dbReference type="EMDB" id="EMD-13441"/>
<dbReference type="EMDB" id="EMD-31835"/>
<dbReference type="EMDB" id="EMD-31875"/>
<dbReference type="EMDB" id="EMD-32042"/>
<dbReference type="EMDB" id="EMD-32047"/>
<dbReference type="EMDB" id="EMD-32058"/>
<dbReference type="EMDB" id="EMD-32059"/>
<dbReference type="SMR" id="P13402"/>
<dbReference type="STRING" id="272943.RSP_0255"/>
<dbReference type="EnsemblBacteria" id="ABA79427">
    <property type="protein sequence ID" value="ABA79427"/>
    <property type="gene ID" value="RSP_0255"/>
</dbReference>
<dbReference type="GeneID" id="67446988"/>
<dbReference type="KEGG" id="rsp:RSP_0255"/>
<dbReference type="PATRIC" id="fig|272943.9.peg.2198"/>
<dbReference type="OrthoDB" id="7689915at2"/>
<dbReference type="Proteomes" id="UP000002703">
    <property type="component" value="Chromosome 1"/>
</dbReference>
<dbReference type="GO" id="GO:0005886">
    <property type="term" value="C:plasma membrane"/>
    <property type="evidence" value="ECO:0007669"/>
    <property type="project" value="UniProtKB-SubCell"/>
</dbReference>
<dbReference type="GO" id="GO:0015979">
    <property type="term" value="P:photosynthesis"/>
    <property type="evidence" value="ECO:0007669"/>
    <property type="project" value="UniProtKB-KW"/>
</dbReference>
<dbReference type="Gene3D" id="1.20.5.920">
    <property type="entry name" value="rhodobacter sphaeroides pufx membrane protein"/>
    <property type="match status" value="1"/>
</dbReference>
<dbReference type="InterPro" id="IPR020169">
    <property type="entry name" value="Intrinsic_membrane_PufX"/>
</dbReference>
<dbReference type="Pfam" id="PF11511">
    <property type="entry name" value="RhodobacterPufX"/>
    <property type="match status" value="1"/>
</dbReference>